<dbReference type="EC" id="2.2.1.2" evidence="1"/>
<dbReference type="EMBL" id="CP001615">
    <property type="protein sequence ID" value="ACQ70275.1"/>
    <property type="molecule type" value="Genomic_DNA"/>
</dbReference>
<dbReference type="SMR" id="C4KYW2"/>
<dbReference type="STRING" id="360911.EAT1b_1348"/>
<dbReference type="KEGG" id="eat:EAT1b_1348"/>
<dbReference type="eggNOG" id="COG0176">
    <property type="taxonomic scope" value="Bacteria"/>
</dbReference>
<dbReference type="HOGENOM" id="CLU_079764_0_0_9"/>
<dbReference type="OrthoDB" id="9807051at2"/>
<dbReference type="UniPathway" id="UPA00115">
    <property type="reaction ID" value="UER00414"/>
</dbReference>
<dbReference type="Proteomes" id="UP000000716">
    <property type="component" value="Chromosome"/>
</dbReference>
<dbReference type="GO" id="GO:0005737">
    <property type="term" value="C:cytoplasm"/>
    <property type="evidence" value="ECO:0007669"/>
    <property type="project" value="UniProtKB-SubCell"/>
</dbReference>
<dbReference type="GO" id="GO:0016832">
    <property type="term" value="F:aldehyde-lyase activity"/>
    <property type="evidence" value="ECO:0007669"/>
    <property type="project" value="InterPro"/>
</dbReference>
<dbReference type="GO" id="GO:0004801">
    <property type="term" value="F:transaldolase activity"/>
    <property type="evidence" value="ECO:0007669"/>
    <property type="project" value="UniProtKB-UniRule"/>
</dbReference>
<dbReference type="GO" id="GO:0005975">
    <property type="term" value="P:carbohydrate metabolic process"/>
    <property type="evidence" value="ECO:0007669"/>
    <property type="project" value="InterPro"/>
</dbReference>
<dbReference type="GO" id="GO:0006098">
    <property type="term" value="P:pentose-phosphate shunt"/>
    <property type="evidence" value="ECO:0007669"/>
    <property type="project" value="UniProtKB-UniRule"/>
</dbReference>
<dbReference type="CDD" id="cd00956">
    <property type="entry name" value="Transaldolase_FSA"/>
    <property type="match status" value="1"/>
</dbReference>
<dbReference type="FunFam" id="3.20.20.70:FF:000018">
    <property type="entry name" value="Probable transaldolase"/>
    <property type="match status" value="1"/>
</dbReference>
<dbReference type="Gene3D" id="3.20.20.70">
    <property type="entry name" value="Aldolase class I"/>
    <property type="match status" value="1"/>
</dbReference>
<dbReference type="HAMAP" id="MF_00494">
    <property type="entry name" value="Transaldolase_3b"/>
    <property type="match status" value="1"/>
</dbReference>
<dbReference type="InterPro" id="IPR013785">
    <property type="entry name" value="Aldolase_TIM"/>
</dbReference>
<dbReference type="InterPro" id="IPR001585">
    <property type="entry name" value="TAL/FSA"/>
</dbReference>
<dbReference type="InterPro" id="IPR022999">
    <property type="entry name" value="Transaldolase_3B"/>
</dbReference>
<dbReference type="InterPro" id="IPR004731">
    <property type="entry name" value="Transaldolase_3B/F6P_aldolase"/>
</dbReference>
<dbReference type="InterPro" id="IPR018225">
    <property type="entry name" value="Transaldolase_AS"/>
</dbReference>
<dbReference type="InterPro" id="IPR033919">
    <property type="entry name" value="TSA/FSA_arc/bac"/>
</dbReference>
<dbReference type="NCBIfam" id="TIGR00875">
    <property type="entry name" value="fsa_talC_mipB"/>
    <property type="match status" value="1"/>
</dbReference>
<dbReference type="PANTHER" id="PTHR10683">
    <property type="entry name" value="TRANSALDOLASE"/>
    <property type="match status" value="1"/>
</dbReference>
<dbReference type="PANTHER" id="PTHR10683:SF36">
    <property type="entry name" value="TRANSALDOLASE"/>
    <property type="match status" value="1"/>
</dbReference>
<dbReference type="Pfam" id="PF00923">
    <property type="entry name" value="TAL_FSA"/>
    <property type="match status" value="1"/>
</dbReference>
<dbReference type="SUPFAM" id="SSF51569">
    <property type="entry name" value="Aldolase"/>
    <property type="match status" value="1"/>
</dbReference>
<dbReference type="PROSITE" id="PS01054">
    <property type="entry name" value="TRANSALDOLASE_1"/>
    <property type="match status" value="1"/>
</dbReference>
<dbReference type="PROSITE" id="PS00958">
    <property type="entry name" value="TRANSALDOLASE_2"/>
    <property type="match status" value="1"/>
</dbReference>
<protein>
    <recommendedName>
        <fullName evidence="1">Probable transaldolase</fullName>
        <ecNumber evidence="1">2.2.1.2</ecNumber>
    </recommendedName>
</protein>
<proteinExistence type="inferred from homology"/>
<name>TAL_EXISA</name>
<gene>
    <name evidence="1" type="primary">tal</name>
    <name type="ordered locus">EAT1b_1348</name>
</gene>
<sequence>MRFFIDTANVEDIKKAHQMGVIGGVTTNPSLVAKEGVDFHTRLREICEIVGDLSVSAEVIALDAPGMVEEGKELAAIAPNITVKVPMTPAGMEAVKQFKELGIKTNVTLIFNANQALLAARAGASYVSPFIGRLDDIGQDGLDLVETIANIFAIHGIETEIIAASVRHPVHVTKAALLGADIATVPYKVIEQMMKHPLTDKGIEQFLADWNNAQSK</sequence>
<organism>
    <name type="scientific">Exiguobacterium sp. (strain ATCC BAA-1283 / AT1b)</name>
    <dbReference type="NCBI Taxonomy" id="360911"/>
    <lineage>
        <taxon>Bacteria</taxon>
        <taxon>Bacillati</taxon>
        <taxon>Bacillota</taxon>
        <taxon>Bacilli</taxon>
        <taxon>Bacillales</taxon>
        <taxon>Bacillales Family XII. Incertae Sedis</taxon>
        <taxon>Exiguobacterium</taxon>
    </lineage>
</organism>
<keyword id="KW-0963">Cytoplasm</keyword>
<keyword id="KW-0570">Pentose shunt</keyword>
<keyword id="KW-0704">Schiff base</keyword>
<keyword id="KW-0808">Transferase</keyword>
<reference key="1">
    <citation type="journal article" date="2011" name="J. Bacteriol.">
        <title>Complete genome sequence of the Thermophilic Bacterium Exiguobacterium sp. AT1b.</title>
        <authorList>
            <person name="Vishnivetskaya T.A."/>
            <person name="Lucas S."/>
            <person name="Copeland A."/>
            <person name="Lapidus A."/>
            <person name="Glavina del Rio T."/>
            <person name="Dalin E."/>
            <person name="Tice H."/>
            <person name="Bruce D.C."/>
            <person name="Goodwin L.A."/>
            <person name="Pitluck S."/>
            <person name="Saunders E."/>
            <person name="Brettin T."/>
            <person name="Detter C."/>
            <person name="Han C."/>
            <person name="Larimer F."/>
            <person name="Land M.L."/>
            <person name="Hauser L.J."/>
            <person name="Kyrpides N.C."/>
            <person name="Ovchinnikova G."/>
            <person name="Kathariou S."/>
            <person name="Ramaley R.F."/>
            <person name="Rodrigues D.F."/>
            <person name="Hendrix C."/>
            <person name="Richardson P."/>
            <person name="Tiedje J.M."/>
        </authorList>
    </citation>
    <scope>NUCLEOTIDE SEQUENCE [LARGE SCALE GENOMIC DNA]</scope>
    <source>
        <strain>ATCC BAA-1283 / AT1b</strain>
    </source>
</reference>
<evidence type="ECO:0000255" key="1">
    <source>
        <dbReference type="HAMAP-Rule" id="MF_00494"/>
    </source>
</evidence>
<feature type="chain" id="PRO_1000206471" description="Probable transaldolase">
    <location>
        <begin position="1"/>
        <end position="216"/>
    </location>
</feature>
<feature type="active site" description="Schiff-base intermediate with substrate" evidence="1">
    <location>
        <position position="84"/>
    </location>
</feature>
<comment type="function">
    <text evidence="1">Transaldolase is important for the balance of metabolites in the pentose-phosphate pathway.</text>
</comment>
<comment type="catalytic activity">
    <reaction evidence="1">
        <text>D-sedoheptulose 7-phosphate + D-glyceraldehyde 3-phosphate = D-erythrose 4-phosphate + beta-D-fructose 6-phosphate</text>
        <dbReference type="Rhea" id="RHEA:17053"/>
        <dbReference type="ChEBI" id="CHEBI:16897"/>
        <dbReference type="ChEBI" id="CHEBI:57483"/>
        <dbReference type="ChEBI" id="CHEBI:57634"/>
        <dbReference type="ChEBI" id="CHEBI:59776"/>
        <dbReference type="EC" id="2.2.1.2"/>
    </reaction>
</comment>
<comment type="pathway">
    <text evidence="1">Carbohydrate degradation; pentose phosphate pathway; D-glyceraldehyde 3-phosphate and beta-D-fructose 6-phosphate from D-ribose 5-phosphate and D-xylulose 5-phosphate (non-oxidative stage): step 2/3.</text>
</comment>
<comment type="subcellular location">
    <subcellularLocation>
        <location evidence="1">Cytoplasm</location>
    </subcellularLocation>
</comment>
<comment type="similarity">
    <text evidence="1">Belongs to the transaldolase family. Type 3B subfamily.</text>
</comment>
<accession>C4KYW2</accession>